<organism evidence="7">
    <name type="scientific">Aedes aegypti</name>
    <name type="common">Yellowfever mosquito</name>
    <name type="synonym">Culex aegypti</name>
    <dbReference type="NCBI Taxonomy" id="7159"/>
    <lineage>
        <taxon>Eukaryota</taxon>
        <taxon>Metazoa</taxon>
        <taxon>Ecdysozoa</taxon>
        <taxon>Arthropoda</taxon>
        <taxon>Hexapoda</taxon>
        <taxon>Insecta</taxon>
        <taxon>Pterygota</taxon>
        <taxon>Neoptera</taxon>
        <taxon>Endopterygota</taxon>
        <taxon>Diptera</taxon>
        <taxon>Nematocera</taxon>
        <taxon>Culicoidea</taxon>
        <taxon>Culicidae</taxon>
        <taxon>Culicinae</taxon>
        <taxon>Aedini</taxon>
        <taxon>Aedes</taxon>
        <taxon>Stegomyia</taxon>
    </lineage>
</organism>
<evidence type="ECO:0000250" key="1"/>
<evidence type="ECO:0000250" key="2">
    <source>
        <dbReference type="UniProtKB" id="Q1LZ08"/>
    </source>
</evidence>
<evidence type="ECO:0000250" key="3">
    <source>
        <dbReference type="UniProtKB" id="Q8TAF3"/>
    </source>
</evidence>
<evidence type="ECO:0000255" key="4"/>
<evidence type="ECO:0000256" key="5">
    <source>
        <dbReference type="SAM" id="MobiDB-lite"/>
    </source>
</evidence>
<evidence type="ECO:0000305" key="6"/>
<evidence type="ECO:0000312" key="7">
    <source>
        <dbReference type="Proteomes" id="UP000008820"/>
    </source>
</evidence>
<dbReference type="EMBL" id="CH477846">
    <property type="protein sequence ID" value="EAT35694.1"/>
    <property type="molecule type" value="Genomic_DNA"/>
</dbReference>
<dbReference type="RefSeq" id="XP_001662285.1">
    <property type="nucleotide sequence ID" value="XM_001662235.1"/>
</dbReference>
<dbReference type="SMR" id="Q16MY0"/>
<dbReference type="FunCoup" id="Q16MY0">
    <property type="interactions" value="3008"/>
</dbReference>
<dbReference type="STRING" id="7159.Q16MY0"/>
<dbReference type="PaxDb" id="7159-AAEL012158-PA"/>
<dbReference type="VEuPathDB" id="VectorBase:AAEL021400"/>
<dbReference type="eggNOG" id="KOG0308">
    <property type="taxonomic scope" value="Eukaryota"/>
</dbReference>
<dbReference type="InParanoid" id="Q16MY0"/>
<dbReference type="OMA" id="IRHYHIL"/>
<dbReference type="PhylomeDB" id="Q16MY0"/>
<dbReference type="Proteomes" id="UP000008820">
    <property type="component" value="Unassembled WGS sequence"/>
</dbReference>
<dbReference type="Proteomes" id="UP000682892">
    <property type="component" value="Unassembled WGS sequence"/>
</dbReference>
<dbReference type="GO" id="GO:0043130">
    <property type="term" value="F:ubiquitin binding"/>
    <property type="evidence" value="ECO:0007669"/>
    <property type="project" value="TreeGrafter"/>
</dbReference>
<dbReference type="GO" id="GO:0000724">
    <property type="term" value="P:double-strand break repair via homologous recombination"/>
    <property type="evidence" value="ECO:0007669"/>
    <property type="project" value="TreeGrafter"/>
</dbReference>
<dbReference type="CDD" id="cd17041">
    <property type="entry name" value="Ubl_WDR48"/>
    <property type="match status" value="1"/>
</dbReference>
<dbReference type="CDD" id="cd00200">
    <property type="entry name" value="WD40"/>
    <property type="match status" value="1"/>
</dbReference>
<dbReference type="FunFam" id="2.130.10.10:FF:000543">
    <property type="entry name" value="WD repeat-containing protein 48 homolog"/>
    <property type="match status" value="1"/>
</dbReference>
<dbReference type="FunFam" id="2.130.10.10:FF:000984">
    <property type="entry name" value="WD repeat-containing protein 48 homolog"/>
    <property type="match status" value="1"/>
</dbReference>
<dbReference type="Gene3D" id="2.130.10.10">
    <property type="entry name" value="YVTN repeat-like/Quinoprotein amine dehydrogenase"/>
    <property type="match status" value="2"/>
</dbReference>
<dbReference type="InterPro" id="IPR020472">
    <property type="entry name" value="G-protein_beta_WD-40_rep"/>
</dbReference>
<dbReference type="InterPro" id="IPR015943">
    <property type="entry name" value="WD40/YVTN_repeat-like_dom_sf"/>
</dbReference>
<dbReference type="InterPro" id="IPR019775">
    <property type="entry name" value="WD40_repeat_CS"/>
</dbReference>
<dbReference type="InterPro" id="IPR036322">
    <property type="entry name" value="WD40_repeat_dom_sf"/>
</dbReference>
<dbReference type="InterPro" id="IPR001680">
    <property type="entry name" value="WD40_rpt"/>
</dbReference>
<dbReference type="InterPro" id="IPR051246">
    <property type="entry name" value="WDR48"/>
</dbReference>
<dbReference type="InterPro" id="IPR021772">
    <property type="entry name" value="WDR48/Bun107"/>
</dbReference>
<dbReference type="PANTHER" id="PTHR19862">
    <property type="entry name" value="WD REPEAT-CONTAINING PROTEIN 48"/>
    <property type="match status" value="1"/>
</dbReference>
<dbReference type="PANTHER" id="PTHR19862:SF14">
    <property type="entry name" value="WD REPEAT-CONTAINING PROTEIN 48"/>
    <property type="match status" value="1"/>
</dbReference>
<dbReference type="Pfam" id="PF11816">
    <property type="entry name" value="DUF3337"/>
    <property type="match status" value="1"/>
</dbReference>
<dbReference type="Pfam" id="PF00400">
    <property type="entry name" value="WD40"/>
    <property type="match status" value="5"/>
</dbReference>
<dbReference type="PRINTS" id="PR00320">
    <property type="entry name" value="GPROTEINBRPT"/>
</dbReference>
<dbReference type="SMART" id="SM00320">
    <property type="entry name" value="WD40"/>
    <property type="match status" value="7"/>
</dbReference>
<dbReference type="SUPFAM" id="SSF50978">
    <property type="entry name" value="WD40 repeat-like"/>
    <property type="match status" value="1"/>
</dbReference>
<dbReference type="PROSITE" id="PS00678">
    <property type="entry name" value="WD_REPEATS_1"/>
    <property type="match status" value="3"/>
</dbReference>
<dbReference type="PROSITE" id="PS50082">
    <property type="entry name" value="WD_REPEATS_2"/>
    <property type="match status" value="5"/>
</dbReference>
<dbReference type="PROSITE" id="PS50294">
    <property type="entry name" value="WD_REPEATS_REGION"/>
    <property type="match status" value="3"/>
</dbReference>
<gene>
    <name type="ORF">AAEL012158</name>
</gene>
<reference key="1">
    <citation type="journal article" date="2007" name="Science">
        <title>Genome sequence of Aedes aegypti, a major arbovirus vector.</title>
        <authorList>
            <person name="Nene V."/>
            <person name="Wortman J.R."/>
            <person name="Lawson D."/>
            <person name="Haas B.J."/>
            <person name="Kodira C.D."/>
            <person name="Tu Z.J."/>
            <person name="Loftus B.J."/>
            <person name="Xi Z."/>
            <person name="Megy K."/>
            <person name="Grabherr M."/>
            <person name="Ren Q."/>
            <person name="Zdobnov E.M."/>
            <person name="Lobo N.F."/>
            <person name="Campbell K.S."/>
            <person name="Brown S.E."/>
            <person name="Bonaldo M.F."/>
            <person name="Zhu J."/>
            <person name="Sinkins S.P."/>
            <person name="Hogenkamp D.G."/>
            <person name="Amedeo P."/>
            <person name="Arensburger P."/>
            <person name="Atkinson P.W."/>
            <person name="Bidwell S.L."/>
            <person name="Biedler J."/>
            <person name="Birney E."/>
            <person name="Bruggner R.V."/>
            <person name="Costas J."/>
            <person name="Coy M.R."/>
            <person name="Crabtree J."/>
            <person name="Crawford M."/>
            <person name="DeBruyn B."/>
            <person name="DeCaprio D."/>
            <person name="Eiglmeier K."/>
            <person name="Eisenstadt E."/>
            <person name="El-Dorry H."/>
            <person name="Gelbart W.M."/>
            <person name="Gomes S.L."/>
            <person name="Hammond M."/>
            <person name="Hannick L.I."/>
            <person name="Hogan J.R."/>
            <person name="Holmes M.H."/>
            <person name="Jaffe D."/>
            <person name="Johnston S.J."/>
            <person name="Kennedy R.C."/>
            <person name="Koo H."/>
            <person name="Kravitz S."/>
            <person name="Kriventseva E.V."/>
            <person name="Kulp D."/>
            <person name="Labutti K."/>
            <person name="Lee E."/>
            <person name="Li S."/>
            <person name="Lovin D.D."/>
            <person name="Mao C."/>
            <person name="Mauceli E."/>
            <person name="Menck C.F."/>
            <person name="Miller J.R."/>
            <person name="Montgomery P."/>
            <person name="Mori A."/>
            <person name="Nascimento A.L."/>
            <person name="Naveira H.F."/>
            <person name="Nusbaum C."/>
            <person name="O'Leary S.B."/>
            <person name="Orvis J."/>
            <person name="Pertea M."/>
            <person name="Quesneville H."/>
            <person name="Reidenbach K.R."/>
            <person name="Rogers Y.-H.C."/>
            <person name="Roth C.W."/>
            <person name="Schneider J.R."/>
            <person name="Schatz M."/>
            <person name="Shumway M."/>
            <person name="Stanke M."/>
            <person name="Stinson E.O."/>
            <person name="Tubio J.M.C."/>
            <person name="Vanzee J.P."/>
            <person name="Verjovski-Almeida S."/>
            <person name="Werner D."/>
            <person name="White O.R."/>
            <person name="Wyder S."/>
            <person name="Zeng Q."/>
            <person name="Zhao Q."/>
            <person name="Zhao Y."/>
            <person name="Hill C.A."/>
            <person name="Raikhel A.S."/>
            <person name="Soares M.B."/>
            <person name="Knudson D.L."/>
            <person name="Lee N.H."/>
            <person name="Galagan J."/>
            <person name="Salzberg S.L."/>
            <person name="Paulsen I.T."/>
            <person name="Dimopoulos G."/>
            <person name="Collins F.H."/>
            <person name="Bruce B."/>
            <person name="Fraser-Liggett C.M."/>
            <person name="Severson D.W."/>
        </authorList>
    </citation>
    <scope>NUCLEOTIDE SEQUENCE [LARGE SCALE GENOMIC DNA]</scope>
    <source>
        <strain>LVPib12</strain>
    </source>
</reference>
<feature type="chain" id="PRO_0000378975" description="WD repeat-containing protein 48 homolog">
    <location>
        <begin position="1"/>
        <end position="659"/>
    </location>
</feature>
<feature type="repeat" description="WD 1" evidence="4">
    <location>
        <begin position="27"/>
        <end position="66"/>
    </location>
</feature>
<feature type="repeat" description="WD 2" evidence="4">
    <location>
        <begin position="73"/>
        <end position="112"/>
    </location>
</feature>
<feature type="repeat" description="WD 3" evidence="4">
    <location>
        <begin position="115"/>
        <end position="154"/>
    </location>
</feature>
<feature type="repeat" description="WD 4" evidence="4">
    <location>
        <begin position="166"/>
        <end position="205"/>
    </location>
</feature>
<feature type="repeat" description="WD 5" evidence="4">
    <location>
        <begin position="208"/>
        <end position="247"/>
    </location>
</feature>
<feature type="repeat" description="WD 6" evidence="4">
    <location>
        <begin position="250"/>
        <end position="289"/>
    </location>
</feature>
<feature type="repeat" description="WD 7" evidence="4">
    <location>
        <begin position="292"/>
        <end position="331"/>
    </location>
</feature>
<feature type="repeat" description="WD 8" evidence="4">
    <location>
        <begin position="337"/>
        <end position="376"/>
    </location>
</feature>
<feature type="region of interest" description="Disordered" evidence="5">
    <location>
        <begin position="592"/>
        <end position="613"/>
    </location>
</feature>
<feature type="compositionally biased region" description="Low complexity" evidence="5">
    <location>
        <begin position="596"/>
        <end position="610"/>
    </location>
</feature>
<keyword id="KW-1185">Reference proteome</keyword>
<keyword id="KW-0677">Repeat</keyword>
<keyword id="KW-0833">Ubl conjugation pathway</keyword>
<keyword id="KW-0853">WD repeat</keyword>
<accession>Q16MY0</accession>
<comment type="function">
    <text evidence="1 2 3">Regulatory component of the Usp12-46 deubiquitylase complex (By similarity). activates deubiquitination by increasing the catalytic turnover without increasing the affinity of deubiquitinating enzymes for the substrate (By similarity). The complex deubiquitylates the wg/wingless-signaling receptor arr/arrow, which stabilizes the receptor and increases its concentration at the cell surface; this enhances the sensitivity of cells to wg/wingless-signal stimulation. This increases the amplitude and spatial range of the signaling response to the wg/wingless morphogen gradient, facilitating the precise concentration-dependent regulation of its target genes. Together with Wdr20 and Usp12-46 required for wg/wingless-mediated signaling in the wing imaginal disc and for wg/wingless-dependent regulation of intestinal stem cell proliferation (By similarity).</text>
</comment>
<comment type="subunit">
    <text evidence="2">Catalytic component of the Usp12-46 deubiquitylase complex consisting of Usp12-46, Wdr20 and Uaf1; regulatory subunit that, together wtih Wdr20, stabilizes Usp12-46. The Usp12-46 deubiquitylase complex associates with arr/arrow; the interaction leads to deubiquitination and stabilization of arr/arrow.</text>
</comment>
<comment type="similarity">
    <text evidence="6">Belongs to the WD repeat WDR48 family.</text>
</comment>
<proteinExistence type="inferred from homology"/>
<name>WDR48_AEDAE</name>
<protein>
    <recommendedName>
        <fullName>WD repeat-containing protein 48 homolog</fullName>
    </recommendedName>
</protein>
<sequence length="659" mass="73706">MLTHKNNQGGRKKMQVSFVIRDAEEKRHRNGVNALQLDTINGRLYSAGRDAIIRVWNSMQNNSQEPYIQSMEHHNDWVNDIVLCCGGRNLISASCDTTVKVWNAHKGFCMSTLRTHRDYVQALAYAKDREQVASAGLDKAIFLWDINTLTALTASNNTVTTSSITGSKDSIYSLAMNPSGTVIVCGSTENTLRIWDPRTCNKIAKLKGHAENVKALVVSEDGQHVISGSSDGKIKQWSIGQQRCVQTISVHSEGVWALLMTDNFSHVISGSRDKKIIMTDLRNPTNSVLICEERAPVLSLCYNYDQTGVWATTWNSDIRCWKLNPSEKLSFEVACIKGGAAIKKYHVLNDKRFMLTKDSEMNVAIYDVLKVKKVEDLGKVDYEEEIKKRSQKVYVPNWFTVDLKTGMPTIVLGQDEVDCFAAWVSAEAGLPEHAESGTDPKVNYGSLLLQALLEYWKPPPPHHHLQGVGSDLDSNGCDGDIRGNEYFSVPKHTPIIFSEVGGRNVCRLLVKDAVGETESALLSETVPSWVTNVVIERTIPKFIKLPFYLLAHPSMLKQDRSKKERLIANEFIQCRKVCEHVLEKVLGADLPASTGNSNSSQNNSQSDANSEGSQVPAEERIELLCNDVICDPNMDLRTVRHFIWKQSSDLTFHYRTKSN</sequence>